<name>RL1_BURA4</name>
<comment type="function">
    <text evidence="1">Binds directly to 23S rRNA. The L1 stalk is quite mobile in the ribosome, and is involved in E site tRNA release.</text>
</comment>
<comment type="function">
    <text evidence="1">Protein L1 is also a translational repressor protein, it controls the translation of the L11 operon by binding to its mRNA.</text>
</comment>
<comment type="subunit">
    <text evidence="1">Part of the 50S ribosomal subunit.</text>
</comment>
<comment type="similarity">
    <text evidence="1">Belongs to the universal ribosomal protein uL1 family.</text>
</comment>
<protein>
    <recommendedName>
        <fullName evidence="1">Large ribosomal subunit protein uL1</fullName>
    </recommendedName>
    <alternativeName>
        <fullName evidence="2">50S ribosomal protein L1</fullName>
    </alternativeName>
</protein>
<feature type="chain" id="PRO_1000141370" description="Large ribosomal subunit protein uL1">
    <location>
        <begin position="1"/>
        <end position="232"/>
    </location>
</feature>
<evidence type="ECO:0000255" key="1">
    <source>
        <dbReference type="HAMAP-Rule" id="MF_01318"/>
    </source>
</evidence>
<evidence type="ECO:0000305" key="2"/>
<proteinExistence type="inferred from homology"/>
<sequence>MAKISKRRQAFAAKVDRQKLYAIEDALALVKECASAKFDESIDVAVQLGIDAKKSDQVVRGSVVLPAGTGKSVRVAVFAQGEKAEQARAAGAEIVGMEDLAEQIKAGQMDFDIVIASPDTMRIVGTLGQILGPRGLMPNPKVGTVTPDVATAVKNAKAGQVQFRVDKAGIIHATIGRASFEAAALRSNLSALIEALQKAKPATSKGVYLRKVALSSTMGVGLRVDQATLAAQ</sequence>
<accession>B1YRB9</accession>
<reference key="1">
    <citation type="submission" date="2008-04" db="EMBL/GenBank/DDBJ databases">
        <title>Complete sequence of chromosome 1 of Burkholderia ambifaria MC40-6.</title>
        <authorList>
            <person name="Copeland A."/>
            <person name="Lucas S."/>
            <person name="Lapidus A."/>
            <person name="Glavina del Rio T."/>
            <person name="Dalin E."/>
            <person name="Tice H."/>
            <person name="Pitluck S."/>
            <person name="Chain P."/>
            <person name="Malfatti S."/>
            <person name="Shin M."/>
            <person name="Vergez L."/>
            <person name="Lang D."/>
            <person name="Schmutz J."/>
            <person name="Larimer F."/>
            <person name="Land M."/>
            <person name="Hauser L."/>
            <person name="Kyrpides N."/>
            <person name="Lykidis A."/>
            <person name="Ramette A."/>
            <person name="Konstantinidis K."/>
            <person name="Tiedje J."/>
            <person name="Richardson P."/>
        </authorList>
    </citation>
    <scope>NUCLEOTIDE SEQUENCE [LARGE SCALE GENOMIC DNA]</scope>
    <source>
        <strain>MC40-6</strain>
    </source>
</reference>
<organism>
    <name type="scientific">Burkholderia ambifaria (strain MC40-6)</name>
    <dbReference type="NCBI Taxonomy" id="398577"/>
    <lineage>
        <taxon>Bacteria</taxon>
        <taxon>Pseudomonadati</taxon>
        <taxon>Pseudomonadota</taxon>
        <taxon>Betaproteobacteria</taxon>
        <taxon>Burkholderiales</taxon>
        <taxon>Burkholderiaceae</taxon>
        <taxon>Burkholderia</taxon>
        <taxon>Burkholderia cepacia complex</taxon>
    </lineage>
</organism>
<dbReference type="EMBL" id="CP001025">
    <property type="protein sequence ID" value="ACB62766.1"/>
    <property type="molecule type" value="Genomic_DNA"/>
</dbReference>
<dbReference type="RefSeq" id="WP_006759673.1">
    <property type="nucleotide sequence ID" value="NC_010551.1"/>
</dbReference>
<dbReference type="SMR" id="B1YRB9"/>
<dbReference type="GeneID" id="93084329"/>
<dbReference type="KEGG" id="bac:BamMC406_0265"/>
<dbReference type="HOGENOM" id="CLU_062853_0_0_4"/>
<dbReference type="OrthoDB" id="9803740at2"/>
<dbReference type="Proteomes" id="UP000001680">
    <property type="component" value="Chromosome 1"/>
</dbReference>
<dbReference type="GO" id="GO:0022625">
    <property type="term" value="C:cytosolic large ribosomal subunit"/>
    <property type="evidence" value="ECO:0007669"/>
    <property type="project" value="TreeGrafter"/>
</dbReference>
<dbReference type="GO" id="GO:0019843">
    <property type="term" value="F:rRNA binding"/>
    <property type="evidence" value="ECO:0007669"/>
    <property type="project" value="UniProtKB-UniRule"/>
</dbReference>
<dbReference type="GO" id="GO:0003735">
    <property type="term" value="F:structural constituent of ribosome"/>
    <property type="evidence" value="ECO:0007669"/>
    <property type="project" value="InterPro"/>
</dbReference>
<dbReference type="GO" id="GO:0000049">
    <property type="term" value="F:tRNA binding"/>
    <property type="evidence" value="ECO:0007669"/>
    <property type="project" value="UniProtKB-KW"/>
</dbReference>
<dbReference type="GO" id="GO:0006417">
    <property type="term" value="P:regulation of translation"/>
    <property type="evidence" value="ECO:0007669"/>
    <property type="project" value="UniProtKB-KW"/>
</dbReference>
<dbReference type="GO" id="GO:0006412">
    <property type="term" value="P:translation"/>
    <property type="evidence" value="ECO:0007669"/>
    <property type="project" value="UniProtKB-UniRule"/>
</dbReference>
<dbReference type="CDD" id="cd00403">
    <property type="entry name" value="Ribosomal_L1"/>
    <property type="match status" value="1"/>
</dbReference>
<dbReference type="FunFam" id="3.40.50.790:FF:000001">
    <property type="entry name" value="50S ribosomal protein L1"/>
    <property type="match status" value="1"/>
</dbReference>
<dbReference type="Gene3D" id="3.30.190.20">
    <property type="match status" value="1"/>
</dbReference>
<dbReference type="Gene3D" id="3.40.50.790">
    <property type="match status" value="1"/>
</dbReference>
<dbReference type="HAMAP" id="MF_01318_B">
    <property type="entry name" value="Ribosomal_uL1_B"/>
    <property type="match status" value="1"/>
</dbReference>
<dbReference type="InterPro" id="IPR005878">
    <property type="entry name" value="Ribosom_uL1_bac-type"/>
</dbReference>
<dbReference type="InterPro" id="IPR002143">
    <property type="entry name" value="Ribosomal_uL1"/>
</dbReference>
<dbReference type="InterPro" id="IPR023674">
    <property type="entry name" value="Ribosomal_uL1-like"/>
</dbReference>
<dbReference type="InterPro" id="IPR028364">
    <property type="entry name" value="Ribosomal_uL1/biogenesis"/>
</dbReference>
<dbReference type="InterPro" id="IPR016095">
    <property type="entry name" value="Ribosomal_uL1_3-a/b-sand"/>
</dbReference>
<dbReference type="InterPro" id="IPR023673">
    <property type="entry name" value="Ribosomal_uL1_CS"/>
</dbReference>
<dbReference type="NCBIfam" id="TIGR01169">
    <property type="entry name" value="rplA_bact"/>
    <property type="match status" value="1"/>
</dbReference>
<dbReference type="PANTHER" id="PTHR36427">
    <property type="entry name" value="54S RIBOSOMAL PROTEIN L1, MITOCHONDRIAL"/>
    <property type="match status" value="1"/>
</dbReference>
<dbReference type="PANTHER" id="PTHR36427:SF3">
    <property type="entry name" value="LARGE RIBOSOMAL SUBUNIT PROTEIN UL1M"/>
    <property type="match status" value="1"/>
</dbReference>
<dbReference type="Pfam" id="PF00687">
    <property type="entry name" value="Ribosomal_L1"/>
    <property type="match status" value="1"/>
</dbReference>
<dbReference type="PIRSF" id="PIRSF002155">
    <property type="entry name" value="Ribosomal_L1"/>
    <property type="match status" value="1"/>
</dbReference>
<dbReference type="SUPFAM" id="SSF56808">
    <property type="entry name" value="Ribosomal protein L1"/>
    <property type="match status" value="1"/>
</dbReference>
<dbReference type="PROSITE" id="PS01199">
    <property type="entry name" value="RIBOSOMAL_L1"/>
    <property type="match status" value="1"/>
</dbReference>
<gene>
    <name evidence="1" type="primary">rplA</name>
    <name type="ordered locus">BamMC406_0265</name>
</gene>
<keyword id="KW-0678">Repressor</keyword>
<keyword id="KW-0687">Ribonucleoprotein</keyword>
<keyword id="KW-0689">Ribosomal protein</keyword>
<keyword id="KW-0694">RNA-binding</keyword>
<keyword id="KW-0699">rRNA-binding</keyword>
<keyword id="KW-0810">Translation regulation</keyword>
<keyword id="KW-0820">tRNA-binding</keyword>